<comment type="function">
    <text>This cyclic nucleotide-gated channel is activated equally well by both cAMP and cGMP.</text>
</comment>
<comment type="subcellular location">
    <subcellularLocation>
        <location evidence="4">Membrane</location>
        <topology evidence="4">Multi-pass membrane protein</topology>
    </subcellularLocation>
</comment>
<comment type="tissue specificity">
    <text>Olfactory neurons.</text>
</comment>
<comment type="similarity">
    <text evidence="4">Belongs to the cyclic nucleotide-gated cation channel (TC 1.A.1.5) family.</text>
</comment>
<dbReference type="EMBL" id="M83111">
    <property type="status" value="NOT_ANNOTATED_CDS"/>
    <property type="molecule type" value="Genomic_RNA"/>
</dbReference>
<dbReference type="PIR" id="JH0560">
    <property type="entry name" value="JH0560"/>
</dbReference>
<dbReference type="SMR" id="P55934"/>
<dbReference type="TCDB" id="1.A.1.5.1">
    <property type="family name" value="the voltage-gated ion channel (vic) superfamily"/>
</dbReference>
<dbReference type="Proteomes" id="UP000221080">
    <property type="component" value="Unplaced"/>
</dbReference>
<dbReference type="GO" id="GO:0017071">
    <property type="term" value="C:intracellular cyclic nucleotide activated cation channel complex"/>
    <property type="evidence" value="ECO:0007669"/>
    <property type="project" value="TreeGrafter"/>
</dbReference>
<dbReference type="GO" id="GO:0005886">
    <property type="term" value="C:plasma membrane"/>
    <property type="evidence" value="ECO:0007669"/>
    <property type="project" value="TreeGrafter"/>
</dbReference>
<dbReference type="GO" id="GO:0030552">
    <property type="term" value="F:cAMP binding"/>
    <property type="evidence" value="ECO:0007669"/>
    <property type="project" value="UniProtKB-KW"/>
</dbReference>
<dbReference type="GO" id="GO:0030553">
    <property type="term" value="F:cGMP binding"/>
    <property type="evidence" value="ECO:0007669"/>
    <property type="project" value="UniProtKB-KW"/>
</dbReference>
<dbReference type="GO" id="GO:0005222">
    <property type="term" value="F:intracellularly cAMP-activated cation channel activity"/>
    <property type="evidence" value="ECO:0007669"/>
    <property type="project" value="TreeGrafter"/>
</dbReference>
<dbReference type="GO" id="GO:0005223">
    <property type="term" value="F:intracellularly cGMP-activated cation channel activity"/>
    <property type="evidence" value="ECO:0007669"/>
    <property type="project" value="TreeGrafter"/>
</dbReference>
<dbReference type="GO" id="GO:0044877">
    <property type="term" value="F:protein-containing complex binding"/>
    <property type="evidence" value="ECO:0007669"/>
    <property type="project" value="TreeGrafter"/>
</dbReference>
<dbReference type="GO" id="GO:0007608">
    <property type="term" value="P:sensory perception of smell"/>
    <property type="evidence" value="ECO:0007669"/>
    <property type="project" value="UniProtKB-KW"/>
</dbReference>
<dbReference type="CDD" id="cd00038">
    <property type="entry name" value="CAP_ED"/>
    <property type="match status" value="1"/>
</dbReference>
<dbReference type="FunFam" id="2.60.120.10:FF:000002">
    <property type="entry name" value="Cyclic nucleotide gated channel alpha 1a"/>
    <property type="match status" value="1"/>
</dbReference>
<dbReference type="FunFam" id="1.10.287.630:FF:000001">
    <property type="entry name" value="Cyclic nucleotide-gated channel alpha 3"/>
    <property type="match status" value="1"/>
</dbReference>
<dbReference type="FunFam" id="1.10.287.70:FF:000030">
    <property type="entry name" value="Cyclic nucleotide-gated channel alpha 3"/>
    <property type="match status" value="1"/>
</dbReference>
<dbReference type="FunFam" id="1.20.5.300:FF:000002">
    <property type="entry name" value="Cyclic nucleotide-gated channel alpha 3"/>
    <property type="match status" value="1"/>
</dbReference>
<dbReference type="Gene3D" id="1.10.287.70">
    <property type="match status" value="1"/>
</dbReference>
<dbReference type="Gene3D" id="1.20.5.170">
    <property type="match status" value="1"/>
</dbReference>
<dbReference type="Gene3D" id="1.10.287.630">
    <property type="entry name" value="Helix hairpin bin"/>
    <property type="match status" value="1"/>
</dbReference>
<dbReference type="Gene3D" id="2.60.120.10">
    <property type="entry name" value="Jelly Rolls"/>
    <property type="match status" value="1"/>
</dbReference>
<dbReference type="InterPro" id="IPR032406">
    <property type="entry name" value="CLZ_dom"/>
</dbReference>
<dbReference type="InterPro" id="IPR050866">
    <property type="entry name" value="CNG_cation_channel"/>
</dbReference>
<dbReference type="InterPro" id="IPR018488">
    <property type="entry name" value="cNMP-bd_CS"/>
</dbReference>
<dbReference type="InterPro" id="IPR000595">
    <property type="entry name" value="cNMP-bd_dom"/>
</dbReference>
<dbReference type="InterPro" id="IPR018490">
    <property type="entry name" value="cNMP-bd_dom_sf"/>
</dbReference>
<dbReference type="InterPro" id="IPR005821">
    <property type="entry name" value="Ion_trans_dom"/>
</dbReference>
<dbReference type="InterPro" id="IPR014710">
    <property type="entry name" value="RmlC-like_jellyroll"/>
</dbReference>
<dbReference type="PANTHER" id="PTHR45638">
    <property type="entry name" value="CYCLIC NUCLEOTIDE-GATED CATION CHANNEL SUBUNIT A"/>
    <property type="match status" value="1"/>
</dbReference>
<dbReference type="PANTHER" id="PTHR45638:SF3">
    <property type="entry name" value="CYCLIC NUCLEOTIDE-GATED OLFACTORY CHANNEL"/>
    <property type="match status" value="1"/>
</dbReference>
<dbReference type="Pfam" id="PF16526">
    <property type="entry name" value="CLZ"/>
    <property type="match status" value="1"/>
</dbReference>
<dbReference type="Pfam" id="PF00027">
    <property type="entry name" value="cNMP_binding"/>
    <property type="match status" value="1"/>
</dbReference>
<dbReference type="Pfam" id="PF00520">
    <property type="entry name" value="Ion_trans"/>
    <property type="match status" value="1"/>
</dbReference>
<dbReference type="SMART" id="SM00100">
    <property type="entry name" value="cNMP"/>
    <property type="match status" value="1"/>
</dbReference>
<dbReference type="SUPFAM" id="SSF51206">
    <property type="entry name" value="cAMP-binding domain-like"/>
    <property type="match status" value="1"/>
</dbReference>
<dbReference type="SUPFAM" id="SSF81324">
    <property type="entry name" value="Voltage-gated potassium channels"/>
    <property type="match status" value="1"/>
</dbReference>
<dbReference type="PROSITE" id="PS00888">
    <property type="entry name" value="CNMP_BINDING_1"/>
    <property type="match status" value="1"/>
</dbReference>
<dbReference type="PROSITE" id="PS00889">
    <property type="entry name" value="CNMP_BINDING_2"/>
    <property type="match status" value="1"/>
</dbReference>
<dbReference type="PROSITE" id="PS50042">
    <property type="entry name" value="CNMP_BINDING_3"/>
    <property type="match status" value="1"/>
</dbReference>
<protein>
    <recommendedName>
        <fullName>Cyclic nucleotide-gated cation channel</fullName>
    </recommendedName>
</protein>
<evidence type="ECO:0000250" key="1"/>
<evidence type="ECO:0000255" key="2"/>
<evidence type="ECO:0000256" key="3">
    <source>
        <dbReference type="SAM" id="MobiDB-lite"/>
    </source>
</evidence>
<evidence type="ECO:0000305" key="4"/>
<accession>P55934</accession>
<proteinExistence type="evidence at transcript level"/>
<name>CNG_ICTPU</name>
<reference key="1">
    <citation type="journal article" date="1992" name="Neuron">
        <title>Molecular cloning and single-channel properties of the cyclic nucleotide-gated channel from catfish olfactory neurons.</title>
        <authorList>
            <person name="Goulding E.H."/>
            <person name="Ngai J."/>
            <person name="Kramer R.H."/>
            <person name="Colicos S."/>
            <person name="Axel R."/>
            <person name="Siegelbaum S.A."/>
            <person name="Chess A."/>
        </authorList>
    </citation>
    <scope>NUCLEOTIDE SEQUENCE [GENOMIC RNA]</scope>
    <source>
        <tissue>Olfactory neuroepithelium</tissue>
    </source>
</reference>
<feature type="chain" id="PRO_0000219326" description="Cyclic nucleotide-gated cation channel">
    <location>
        <begin position="1"/>
        <end position="682"/>
    </location>
</feature>
<feature type="topological domain" description="Cytoplasmic" evidence="2">
    <location>
        <begin position="1"/>
        <end position="136"/>
    </location>
</feature>
<feature type="transmembrane region" description="Helical; Name=H1" evidence="2">
    <location>
        <begin position="137"/>
        <end position="157"/>
    </location>
</feature>
<feature type="topological domain" description="Extracellular" evidence="2">
    <location>
        <begin position="158"/>
        <end position="169"/>
    </location>
</feature>
<feature type="transmembrane region" description="Helical; Name=H2" evidence="2">
    <location>
        <begin position="170"/>
        <end position="190"/>
    </location>
</feature>
<feature type="topological domain" description="Cytoplasmic" evidence="2">
    <location>
        <begin position="191"/>
        <end position="218"/>
    </location>
</feature>
<feature type="transmembrane region" description="Helical; Name=H3" evidence="2">
    <location>
        <begin position="219"/>
        <end position="239"/>
    </location>
</feature>
<feature type="topological domain" description="Extracellular" evidence="2">
    <location>
        <begin position="240"/>
        <end position="272"/>
    </location>
</feature>
<feature type="transmembrane region" description="Helical; Name=H4" evidence="2">
    <location>
        <begin position="273"/>
        <end position="293"/>
    </location>
</feature>
<feature type="topological domain" description="Cytoplasmic" evidence="2">
    <location>
        <begin position="294"/>
        <end position="311"/>
    </location>
</feature>
<feature type="transmembrane region" description="Helical; Name=H5" evidence="2">
    <location>
        <begin position="312"/>
        <end position="332"/>
    </location>
</feature>
<feature type="topological domain" description="Extracellular" evidence="2">
    <location>
        <begin position="333"/>
        <end position="343"/>
    </location>
</feature>
<feature type="transmembrane region" description="Helical; Name=H6" evidence="2">
    <location>
        <begin position="344"/>
        <end position="364"/>
    </location>
</feature>
<feature type="topological domain" description="Cytoplasmic" evidence="2">
    <location>
        <begin position="365"/>
        <end position="682"/>
    </location>
</feature>
<feature type="region of interest" description="Disordered" evidence="3">
    <location>
        <begin position="1"/>
        <end position="41"/>
    </location>
</feature>
<feature type="region of interest" description="Disordered" evidence="3">
    <location>
        <begin position="649"/>
        <end position="682"/>
    </location>
</feature>
<feature type="compositionally biased region" description="Basic and acidic residues" evidence="3">
    <location>
        <begin position="20"/>
        <end position="30"/>
    </location>
</feature>
<feature type="compositionally biased region" description="Basic and acidic residues" evidence="3">
    <location>
        <begin position="658"/>
        <end position="672"/>
    </location>
</feature>
<feature type="binding site" evidence="1">
    <location>
        <begin position="455"/>
        <end position="577"/>
    </location>
    <ligand>
        <name>3',5'-cyclic AMP</name>
        <dbReference type="ChEBI" id="CHEBI:58165"/>
    </ligand>
</feature>
<feature type="binding site" evidence="2">
    <location>
        <position position="514"/>
    </location>
    <ligand>
        <name>3',5'-cyclic AMP</name>
        <dbReference type="ChEBI" id="CHEBI:58165"/>
    </ligand>
</feature>
<feature type="binding site" evidence="2">
    <location>
        <position position="529"/>
    </location>
    <ligand>
        <name>3',5'-cyclic AMP</name>
        <dbReference type="ChEBI" id="CHEBI:58165"/>
    </ligand>
</feature>
<organism>
    <name type="scientific">Ictalurus punctatus</name>
    <name type="common">Channel catfish</name>
    <name type="synonym">Silurus punctatus</name>
    <dbReference type="NCBI Taxonomy" id="7998"/>
    <lineage>
        <taxon>Eukaryota</taxon>
        <taxon>Metazoa</taxon>
        <taxon>Chordata</taxon>
        <taxon>Craniata</taxon>
        <taxon>Vertebrata</taxon>
        <taxon>Euteleostomi</taxon>
        <taxon>Actinopterygii</taxon>
        <taxon>Neopterygii</taxon>
        <taxon>Teleostei</taxon>
        <taxon>Ostariophysi</taxon>
        <taxon>Siluriformes</taxon>
        <taxon>Ictaluridae</taxon>
        <taxon>Ictalurus</taxon>
    </lineage>
</organism>
<keyword id="KW-0114">cAMP</keyword>
<keyword id="KW-0116">cAMP-binding</keyword>
<keyword id="KW-0140">cGMP</keyword>
<keyword id="KW-0142">cGMP-binding</keyword>
<keyword id="KW-0407">Ion channel</keyword>
<keyword id="KW-0406">Ion transport</keyword>
<keyword id="KW-1071">Ligand-gated ion channel</keyword>
<keyword id="KW-0472">Membrane</keyword>
<keyword id="KW-0547">Nucleotide-binding</keyword>
<keyword id="KW-0552">Olfaction</keyword>
<keyword id="KW-0716">Sensory transduction</keyword>
<keyword id="KW-0812">Transmembrane</keyword>
<keyword id="KW-1133">Transmembrane helix</keyword>
<keyword id="KW-0813">Transport</keyword>
<sequence>MTGQAALERSVSSHRLSVRSRLEGEAERAESAISRTDGDDDTCSELQRVTALELPSAEMLEAFTQRRPLARLVNLVLSLREWAHKSLVETEQRPDSFLERFRGPQAANDQSAAPADAPKKTFKERWEGFVVSQSDDIYYYWLFFIALASLYNWIMLVARACFDQLQDENFFLWVGLDYLCDVIYILDTCIRLRTGYLEQGLLVKDLAKLRDNYIRTLQFKLDFLSILPTELLFFVTGYVPQLRFNRLLRFSRMFEFFDRTETRTNYPNAFRICNLILYILVIIHWNACIYYAISKALGLSSDTWVYSGQNKTLSFCYVYCFYWSTLTLTTIGEMPPPVKDEEYVFVVFDFLVGVLIFATIVGNVGSMIANMNATRAEFQTRIDAIKHYMHFRKVNRTLETRVIKWFDYLWTNKKTVDEQEVLKNLPDKLRAEIAINVHLDTLKKVRIFQDCEAGLLVELVLKLRPQVYSPGDYICRKGDIGKEMYIIKEGQLAVVADDGVTQFALLTAGGCFGEISILNIQGSKMGNRRTANIRSIGYSDLFCLSKDDLMEAVAEYPDAQKVLEERGREILRKQGLLDESVAAGGLGVIDTEEKVERLDASLDILQTRFARLLGEFTSTQRRLKQRITALERQLCHTGLGLLSDNEAEGEHAGVPTHTHADIHAQPETHTRTSAETNSEEET</sequence>